<proteinExistence type="inferred from homology"/>
<organism>
    <name type="scientific">Francisella tularensis subsp. holarctica (strain LVS)</name>
    <dbReference type="NCBI Taxonomy" id="376619"/>
    <lineage>
        <taxon>Bacteria</taxon>
        <taxon>Pseudomonadati</taxon>
        <taxon>Pseudomonadota</taxon>
        <taxon>Gammaproteobacteria</taxon>
        <taxon>Thiotrichales</taxon>
        <taxon>Francisellaceae</taxon>
        <taxon>Francisella</taxon>
    </lineage>
</organism>
<protein>
    <recommendedName>
        <fullName evidence="1">tRNA dimethylallyltransferase</fullName>
        <ecNumber evidence="1">2.5.1.75</ecNumber>
    </recommendedName>
    <alternativeName>
        <fullName evidence="1">Dimethylallyl diphosphate:tRNA dimethylallyltransferase</fullName>
        <shortName evidence="1">DMAPP:tRNA dimethylallyltransferase</shortName>
        <shortName evidence="1">DMATase</shortName>
    </alternativeName>
    <alternativeName>
        <fullName evidence="1">Isopentenyl-diphosphate:tRNA isopentenyltransferase</fullName>
        <shortName evidence="1">IPP transferase</shortName>
        <shortName evidence="1">IPPT</shortName>
        <shortName evidence="1">IPTase</shortName>
    </alternativeName>
</protein>
<sequence length="308" mass="34833">MSKLIYGLAGPTASGKTSLSILLAKKINAEIISVDSSLVYKGMDIGTAKPTLQEQDGIKHHLIDIIEPTGNFSVADFISSVNKLKKEIWARGREVLLVGGTMLYFKGLIEGLSALPESQAEIREALEYQKKAKGLQYLHQQLNEIDPQSAQKINPNDQQRIFRALEVIMISGKKYSELVKTSKVGGLDEDLKLCALVPNDRSILHKNIESRFRQMLDQGFLDEVQNLHKNPMLTKETTAIRSVGYRQAWEYLDGDISYDEFVKKGIVATRQLAKRQLTWIRNWQSSINIVAMENETKELDILKYFGYK</sequence>
<feature type="chain" id="PRO_1000020600" description="tRNA dimethylallyltransferase">
    <location>
        <begin position="1"/>
        <end position="308"/>
    </location>
</feature>
<feature type="region of interest" description="Interaction with substrate tRNA" evidence="1">
    <location>
        <begin position="35"/>
        <end position="38"/>
    </location>
</feature>
<feature type="region of interest" description="Interaction with substrate tRNA" evidence="1">
    <location>
        <begin position="159"/>
        <end position="163"/>
    </location>
</feature>
<feature type="binding site" evidence="1">
    <location>
        <begin position="10"/>
        <end position="17"/>
    </location>
    <ligand>
        <name>ATP</name>
        <dbReference type="ChEBI" id="CHEBI:30616"/>
    </ligand>
</feature>
<feature type="binding site" evidence="1">
    <location>
        <begin position="12"/>
        <end position="17"/>
    </location>
    <ligand>
        <name>substrate</name>
    </ligand>
</feature>
<feature type="site" description="Interaction with substrate tRNA" evidence="1">
    <location>
        <position position="101"/>
    </location>
</feature>
<feature type="site" description="Interaction with substrate tRNA" evidence="1">
    <location>
        <position position="123"/>
    </location>
</feature>
<reference key="1">
    <citation type="submission" date="2006-03" db="EMBL/GenBank/DDBJ databases">
        <title>Complete genome sequence of Francisella tularensis LVS (Live Vaccine Strain).</title>
        <authorList>
            <person name="Chain P."/>
            <person name="Larimer F."/>
            <person name="Land M."/>
            <person name="Stilwagen S."/>
            <person name="Larsson P."/>
            <person name="Bearden S."/>
            <person name="Chu M."/>
            <person name="Oyston P."/>
            <person name="Forsman M."/>
            <person name="Andersson S."/>
            <person name="Lindler L."/>
            <person name="Titball R."/>
            <person name="Garcia E."/>
        </authorList>
    </citation>
    <scope>NUCLEOTIDE SEQUENCE [LARGE SCALE GENOMIC DNA]</scope>
    <source>
        <strain>LVS</strain>
    </source>
</reference>
<accession>Q2A3T6</accession>
<dbReference type="EC" id="2.5.1.75" evidence="1"/>
<dbReference type="EMBL" id="AM233362">
    <property type="protein sequence ID" value="CAJ79336.1"/>
    <property type="molecule type" value="Genomic_DNA"/>
</dbReference>
<dbReference type="RefSeq" id="WP_003015652.1">
    <property type="nucleotide sequence ID" value="NZ_CP009694.1"/>
</dbReference>
<dbReference type="SMR" id="Q2A3T6"/>
<dbReference type="KEGG" id="ftl:FTL_0897"/>
<dbReference type="Proteomes" id="UP000001944">
    <property type="component" value="Chromosome"/>
</dbReference>
<dbReference type="GO" id="GO:0005524">
    <property type="term" value="F:ATP binding"/>
    <property type="evidence" value="ECO:0007669"/>
    <property type="project" value="UniProtKB-UniRule"/>
</dbReference>
<dbReference type="GO" id="GO:0052381">
    <property type="term" value="F:tRNA dimethylallyltransferase activity"/>
    <property type="evidence" value="ECO:0007669"/>
    <property type="project" value="UniProtKB-UniRule"/>
</dbReference>
<dbReference type="GO" id="GO:0006400">
    <property type="term" value="P:tRNA modification"/>
    <property type="evidence" value="ECO:0007669"/>
    <property type="project" value="TreeGrafter"/>
</dbReference>
<dbReference type="FunFam" id="1.10.20.140:FF:000001">
    <property type="entry name" value="tRNA dimethylallyltransferase"/>
    <property type="match status" value="1"/>
</dbReference>
<dbReference type="Gene3D" id="1.10.20.140">
    <property type="match status" value="1"/>
</dbReference>
<dbReference type="Gene3D" id="3.40.50.300">
    <property type="entry name" value="P-loop containing nucleotide triphosphate hydrolases"/>
    <property type="match status" value="1"/>
</dbReference>
<dbReference type="HAMAP" id="MF_00185">
    <property type="entry name" value="IPP_trans"/>
    <property type="match status" value="1"/>
</dbReference>
<dbReference type="InterPro" id="IPR039657">
    <property type="entry name" value="Dimethylallyltransferase"/>
</dbReference>
<dbReference type="InterPro" id="IPR018022">
    <property type="entry name" value="IPT"/>
</dbReference>
<dbReference type="InterPro" id="IPR027417">
    <property type="entry name" value="P-loop_NTPase"/>
</dbReference>
<dbReference type="NCBIfam" id="TIGR00174">
    <property type="entry name" value="miaA"/>
    <property type="match status" value="1"/>
</dbReference>
<dbReference type="PANTHER" id="PTHR11088">
    <property type="entry name" value="TRNA DIMETHYLALLYLTRANSFERASE"/>
    <property type="match status" value="1"/>
</dbReference>
<dbReference type="PANTHER" id="PTHR11088:SF60">
    <property type="entry name" value="TRNA DIMETHYLALLYLTRANSFERASE"/>
    <property type="match status" value="1"/>
</dbReference>
<dbReference type="Pfam" id="PF01715">
    <property type="entry name" value="IPPT"/>
    <property type="match status" value="1"/>
</dbReference>
<dbReference type="SUPFAM" id="SSF52540">
    <property type="entry name" value="P-loop containing nucleoside triphosphate hydrolases"/>
    <property type="match status" value="1"/>
</dbReference>
<keyword id="KW-0067">ATP-binding</keyword>
<keyword id="KW-0460">Magnesium</keyword>
<keyword id="KW-0547">Nucleotide-binding</keyword>
<keyword id="KW-1185">Reference proteome</keyword>
<keyword id="KW-0808">Transferase</keyword>
<keyword id="KW-0819">tRNA processing</keyword>
<evidence type="ECO:0000255" key="1">
    <source>
        <dbReference type="HAMAP-Rule" id="MF_00185"/>
    </source>
</evidence>
<comment type="function">
    <text evidence="1">Catalyzes the transfer of a dimethylallyl group onto the adenine at position 37 in tRNAs that read codons beginning with uridine, leading to the formation of N6-(dimethylallyl)adenosine (i(6)A).</text>
</comment>
<comment type="catalytic activity">
    <reaction evidence="1">
        <text>adenosine(37) in tRNA + dimethylallyl diphosphate = N(6)-dimethylallyladenosine(37) in tRNA + diphosphate</text>
        <dbReference type="Rhea" id="RHEA:26482"/>
        <dbReference type="Rhea" id="RHEA-COMP:10162"/>
        <dbReference type="Rhea" id="RHEA-COMP:10375"/>
        <dbReference type="ChEBI" id="CHEBI:33019"/>
        <dbReference type="ChEBI" id="CHEBI:57623"/>
        <dbReference type="ChEBI" id="CHEBI:74411"/>
        <dbReference type="ChEBI" id="CHEBI:74415"/>
        <dbReference type="EC" id="2.5.1.75"/>
    </reaction>
</comment>
<comment type="cofactor">
    <cofactor evidence="1">
        <name>Mg(2+)</name>
        <dbReference type="ChEBI" id="CHEBI:18420"/>
    </cofactor>
</comment>
<comment type="subunit">
    <text evidence="1">Monomer.</text>
</comment>
<comment type="similarity">
    <text evidence="1">Belongs to the IPP transferase family.</text>
</comment>
<gene>
    <name evidence="1" type="primary">miaA</name>
    <name type="ordered locus">FTL_0897</name>
</gene>
<name>MIAA_FRATH</name>